<sequence length="644" mass="73221">MPEIKRLPESVANQISAGEVVERPASVVKELVENSLDAGSNKILIEIENGGKDLIRVKDNGHGIPSDEIEIAFDRYATSKITDINDLYSLKSLGFRGEALASIASVSILDIISRTKSQTKAIKMRLKGGKVISKEPCGASVGTDIIVKDLFFNTPARYKYLKTTRNEFKHISNIITREALAYPGVNFTLIHNGRIVLKTPGTGKTLDCIYAIYGKEMAQSLVKIDYEDRYIKVSGYISRPDYYRYNRSYEIFFVNKRAVHNSILNRGVEEAYQGLLPPGAYPVVFLNLKLNPILVDVNVHPTKKEVKFSRDKVIKEVIQNGINIELSKLDKSPRLKRNINPLNRDDKTKDKSEYQKIKLPEDKEQITNKSSDAGILKNQNPLDSQDSILLPSKKNGFYSKKNSQVSQNKFMDINNKLEKTEINDNYKKDKHYKTDSINIKDNSIKENKNKMDIPIKRVLGQIKNTYIIAEGRDGLYIIDQHNAHERILYQSFIEKYNNSEIVSQPLVVPVNIETTAPEAEVLKSYLPQLEKMGFKLEVFGINSFIVREVPSLIKKRSNKRVVREVIDKLLEHDKAMKPSELINEIISYMSCRGAIKAGEYLDKKEAEQIIEGLFKTDNPYRCPHGRPIIIHITEDDINKGMGRK</sequence>
<accession>B8CX97</accession>
<comment type="function">
    <text evidence="1">This protein is involved in the repair of mismatches in DNA. It is required for dam-dependent methyl-directed DNA mismatch repair. May act as a 'molecular matchmaker', a protein that promotes the formation of a stable complex between two or more DNA-binding proteins in an ATP-dependent manner without itself being part of a final effector complex.</text>
</comment>
<comment type="similarity">
    <text evidence="1">Belongs to the DNA mismatch repair MutL/HexB family.</text>
</comment>
<gene>
    <name evidence="1" type="primary">mutL</name>
    <name type="ordered locus">Hore_11660</name>
</gene>
<name>MUTL_HALOH</name>
<organism>
    <name type="scientific">Halothermothrix orenii (strain H 168 / OCM 544 / DSM 9562)</name>
    <dbReference type="NCBI Taxonomy" id="373903"/>
    <lineage>
        <taxon>Bacteria</taxon>
        <taxon>Bacillati</taxon>
        <taxon>Bacillota</taxon>
        <taxon>Clostridia</taxon>
        <taxon>Halanaerobiales</taxon>
        <taxon>Halothermotrichaceae</taxon>
        <taxon>Halothermothrix</taxon>
    </lineage>
</organism>
<feature type="chain" id="PRO_1000123209" description="DNA mismatch repair protein MutL">
    <location>
        <begin position="1"/>
        <end position="644"/>
    </location>
</feature>
<feature type="region of interest" description="Disordered" evidence="2">
    <location>
        <begin position="336"/>
        <end position="356"/>
    </location>
</feature>
<feature type="compositionally biased region" description="Basic and acidic residues" evidence="2">
    <location>
        <begin position="343"/>
        <end position="356"/>
    </location>
</feature>
<evidence type="ECO:0000255" key="1">
    <source>
        <dbReference type="HAMAP-Rule" id="MF_00149"/>
    </source>
</evidence>
<evidence type="ECO:0000256" key="2">
    <source>
        <dbReference type="SAM" id="MobiDB-lite"/>
    </source>
</evidence>
<reference key="1">
    <citation type="journal article" date="2009" name="PLoS ONE">
        <title>Genome analysis of the anaerobic thermohalophilic bacterium Halothermothrix orenii.</title>
        <authorList>
            <person name="Mavromatis K."/>
            <person name="Ivanova N."/>
            <person name="Anderson I."/>
            <person name="Lykidis A."/>
            <person name="Hooper S.D."/>
            <person name="Sun H."/>
            <person name="Kunin V."/>
            <person name="Lapidus A."/>
            <person name="Hugenholtz P."/>
            <person name="Patel B."/>
            <person name="Kyrpides N.C."/>
        </authorList>
    </citation>
    <scope>NUCLEOTIDE SEQUENCE [LARGE SCALE GENOMIC DNA]</scope>
    <source>
        <strain>H 168 / OCM 544 / DSM 9562</strain>
    </source>
</reference>
<keyword id="KW-0227">DNA damage</keyword>
<keyword id="KW-0234">DNA repair</keyword>
<keyword id="KW-1185">Reference proteome</keyword>
<proteinExistence type="inferred from homology"/>
<dbReference type="EMBL" id="CP001098">
    <property type="protein sequence ID" value="ACL69916.1"/>
    <property type="molecule type" value="Genomic_DNA"/>
</dbReference>
<dbReference type="RefSeq" id="WP_012636101.1">
    <property type="nucleotide sequence ID" value="NC_011899.1"/>
</dbReference>
<dbReference type="SMR" id="B8CX97"/>
<dbReference type="STRING" id="373903.Hore_11660"/>
<dbReference type="KEGG" id="hor:Hore_11660"/>
<dbReference type="eggNOG" id="COG0323">
    <property type="taxonomic scope" value="Bacteria"/>
</dbReference>
<dbReference type="HOGENOM" id="CLU_004131_4_1_9"/>
<dbReference type="OrthoDB" id="9763467at2"/>
<dbReference type="Proteomes" id="UP000000719">
    <property type="component" value="Chromosome"/>
</dbReference>
<dbReference type="GO" id="GO:0032300">
    <property type="term" value="C:mismatch repair complex"/>
    <property type="evidence" value="ECO:0007669"/>
    <property type="project" value="InterPro"/>
</dbReference>
<dbReference type="GO" id="GO:0005524">
    <property type="term" value="F:ATP binding"/>
    <property type="evidence" value="ECO:0007669"/>
    <property type="project" value="InterPro"/>
</dbReference>
<dbReference type="GO" id="GO:0016887">
    <property type="term" value="F:ATP hydrolysis activity"/>
    <property type="evidence" value="ECO:0007669"/>
    <property type="project" value="InterPro"/>
</dbReference>
<dbReference type="GO" id="GO:0140664">
    <property type="term" value="F:ATP-dependent DNA damage sensor activity"/>
    <property type="evidence" value="ECO:0007669"/>
    <property type="project" value="InterPro"/>
</dbReference>
<dbReference type="GO" id="GO:0030983">
    <property type="term" value="F:mismatched DNA binding"/>
    <property type="evidence" value="ECO:0007669"/>
    <property type="project" value="InterPro"/>
</dbReference>
<dbReference type="GO" id="GO:0006298">
    <property type="term" value="P:mismatch repair"/>
    <property type="evidence" value="ECO:0007669"/>
    <property type="project" value="UniProtKB-UniRule"/>
</dbReference>
<dbReference type="CDD" id="cd16926">
    <property type="entry name" value="HATPase_MutL-MLH-PMS-like"/>
    <property type="match status" value="1"/>
</dbReference>
<dbReference type="CDD" id="cd00782">
    <property type="entry name" value="MutL_Trans"/>
    <property type="match status" value="1"/>
</dbReference>
<dbReference type="FunFam" id="3.30.565.10:FF:000003">
    <property type="entry name" value="DNA mismatch repair endonuclease MutL"/>
    <property type="match status" value="1"/>
</dbReference>
<dbReference type="Gene3D" id="3.30.230.10">
    <property type="match status" value="1"/>
</dbReference>
<dbReference type="Gene3D" id="3.30.565.10">
    <property type="entry name" value="Histidine kinase-like ATPase, C-terminal domain"/>
    <property type="match status" value="1"/>
</dbReference>
<dbReference type="Gene3D" id="3.30.1540.20">
    <property type="entry name" value="MutL, C-terminal domain, dimerisation subdomain"/>
    <property type="match status" value="1"/>
</dbReference>
<dbReference type="Gene3D" id="3.30.1370.100">
    <property type="entry name" value="MutL, C-terminal domain, regulatory subdomain"/>
    <property type="match status" value="1"/>
</dbReference>
<dbReference type="HAMAP" id="MF_00149">
    <property type="entry name" value="DNA_mis_repair"/>
    <property type="match status" value="1"/>
</dbReference>
<dbReference type="InterPro" id="IPR014762">
    <property type="entry name" value="DNA_mismatch_repair_CS"/>
</dbReference>
<dbReference type="InterPro" id="IPR020667">
    <property type="entry name" value="DNA_mismatch_repair_MutL"/>
</dbReference>
<dbReference type="InterPro" id="IPR013507">
    <property type="entry name" value="DNA_mismatch_S5_2-like"/>
</dbReference>
<dbReference type="InterPro" id="IPR036890">
    <property type="entry name" value="HATPase_C_sf"/>
</dbReference>
<dbReference type="InterPro" id="IPR002099">
    <property type="entry name" value="MutL/Mlh/PMS"/>
</dbReference>
<dbReference type="InterPro" id="IPR038973">
    <property type="entry name" value="MutL/Mlh/Pms-like"/>
</dbReference>
<dbReference type="InterPro" id="IPR014790">
    <property type="entry name" value="MutL_C"/>
</dbReference>
<dbReference type="InterPro" id="IPR042120">
    <property type="entry name" value="MutL_C_dimsub"/>
</dbReference>
<dbReference type="InterPro" id="IPR042121">
    <property type="entry name" value="MutL_C_regsub"/>
</dbReference>
<dbReference type="InterPro" id="IPR037198">
    <property type="entry name" value="MutL_C_sf"/>
</dbReference>
<dbReference type="InterPro" id="IPR020568">
    <property type="entry name" value="Ribosomal_Su5_D2-typ_SF"/>
</dbReference>
<dbReference type="InterPro" id="IPR014721">
    <property type="entry name" value="Ribsml_uS5_D2-typ_fold_subgr"/>
</dbReference>
<dbReference type="NCBIfam" id="TIGR00585">
    <property type="entry name" value="mutl"/>
    <property type="match status" value="1"/>
</dbReference>
<dbReference type="PANTHER" id="PTHR10073">
    <property type="entry name" value="DNA MISMATCH REPAIR PROTEIN MLH, PMS, MUTL"/>
    <property type="match status" value="1"/>
</dbReference>
<dbReference type="PANTHER" id="PTHR10073:SF12">
    <property type="entry name" value="DNA MISMATCH REPAIR PROTEIN MLH1"/>
    <property type="match status" value="1"/>
</dbReference>
<dbReference type="Pfam" id="PF01119">
    <property type="entry name" value="DNA_mis_repair"/>
    <property type="match status" value="1"/>
</dbReference>
<dbReference type="Pfam" id="PF13589">
    <property type="entry name" value="HATPase_c_3"/>
    <property type="match status" value="1"/>
</dbReference>
<dbReference type="Pfam" id="PF08676">
    <property type="entry name" value="MutL_C"/>
    <property type="match status" value="1"/>
</dbReference>
<dbReference type="SMART" id="SM01340">
    <property type="entry name" value="DNA_mis_repair"/>
    <property type="match status" value="1"/>
</dbReference>
<dbReference type="SMART" id="SM00853">
    <property type="entry name" value="MutL_C"/>
    <property type="match status" value="1"/>
</dbReference>
<dbReference type="SUPFAM" id="SSF55874">
    <property type="entry name" value="ATPase domain of HSP90 chaperone/DNA topoisomerase II/histidine kinase"/>
    <property type="match status" value="1"/>
</dbReference>
<dbReference type="SUPFAM" id="SSF118116">
    <property type="entry name" value="DNA mismatch repair protein MutL"/>
    <property type="match status" value="1"/>
</dbReference>
<dbReference type="SUPFAM" id="SSF54211">
    <property type="entry name" value="Ribosomal protein S5 domain 2-like"/>
    <property type="match status" value="1"/>
</dbReference>
<dbReference type="PROSITE" id="PS00058">
    <property type="entry name" value="DNA_MISMATCH_REPAIR_1"/>
    <property type="match status" value="1"/>
</dbReference>
<protein>
    <recommendedName>
        <fullName evidence="1">DNA mismatch repair protein MutL</fullName>
    </recommendedName>
</protein>